<organism>
    <name type="scientific">Helianthus annuus</name>
    <name type="common">Common sunflower</name>
    <dbReference type="NCBI Taxonomy" id="4232"/>
    <lineage>
        <taxon>Eukaryota</taxon>
        <taxon>Viridiplantae</taxon>
        <taxon>Streptophyta</taxon>
        <taxon>Embryophyta</taxon>
        <taxon>Tracheophyta</taxon>
        <taxon>Spermatophyta</taxon>
        <taxon>Magnoliopsida</taxon>
        <taxon>eudicotyledons</taxon>
        <taxon>Gunneridae</taxon>
        <taxon>Pentapetalae</taxon>
        <taxon>asterids</taxon>
        <taxon>campanulids</taxon>
        <taxon>Asterales</taxon>
        <taxon>Asteraceae</taxon>
        <taxon>Asteroideae</taxon>
        <taxon>Heliantheae alliance</taxon>
        <taxon>Heliantheae</taxon>
        <taxon>Helianthus</taxon>
    </lineage>
</organism>
<reference key="1">
    <citation type="submission" date="2006-01" db="EMBL/GenBank/DDBJ databases">
        <title>A comparison of the first two published chloroplast genomes in Asteraceae: Lactuca and Helianthus.</title>
        <authorList>
            <person name="Timme R.E."/>
            <person name="Kuehl J.V."/>
            <person name="Boore J.L."/>
            <person name="Jansen R.K."/>
        </authorList>
    </citation>
    <scope>NUCLEOTIDE SEQUENCE [LARGE SCALE GENOMIC DNA]</scope>
    <source>
        <strain>cv. HA383</strain>
    </source>
</reference>
<name>PETL_HELAN</name>
<comment type="function">
    <text evidence="1">Component of the cytochrome b6-f complex, which mediates electron transfer between photosystem II (PSII) and photosystem I (PSI), cyclic electron flow around PSI, and state transitions. PetL is important for photoautotrophic growth as well as for electron transfer efficiency and stability of the cytochrome b6-f complex.</text>
</comment>
<comment type="subunit">
    <text evidence="1">The 4 large subunits of the cytochrome b6-f complex are cytochrome b6, subunit IV (17 kDa polypeptide, PetD), cytochrome f and the Rieske protein, while the 4 small subunits are PetG, PetL, PetM and PetN. The complex functions as a dimer.</text>
</comment>
<comment type="subcellular location">
    <subcellularLocation>
        <location evidence="1">Plastid</location>
        <location evidence="1">Chloroplast thylakoid membrane</location>
        <topology evidence="1">Single-pass membrane protein</topology>
    </subcellularLocation>
</comment>
<comment type="similarity">
    <text evidence="1">Belongs to the PetL family.</text>
</comment>
<evidence type="ECO:0000255" key="1">
    <source>
        <dbReference type="HAMAP-Rule" id="MF_00433"/>
    </source>
</evidence>
<sequence length="31" mass="3385">MPIITSYFGFLLTALTIASALFIGLSKIRLI</sequence>
<dbReference type="EMBL" id="DQ383815">
    <property type="protein sequence ID" value="ABD47164.1"/>
    <property type="molecule type" value="Genomic_DNA"/>
</dbReference>
<dbReference type="RefSeq" id="YP_588135.1">
    <property type="nucleotide sequence ID" value="NC_007977.1"/>
</dbReference>
<dbReference type="SMR" id="Q1KXU1"/>
<dbReference type="GeneID" id="4055672"/>
<dbReference type="KEGG" id="han:4055672"/>
<dbReference type="OrthoDB" id="738066at2759"/>
<dbReference type="GO" id="GO:0009535">
    <property type="term" value="C:chloroplast thylakoid membrane"/>
    <property type="evidence" value="ECO:0007669"/>
    <property type="project" value="UniProtKB-SubCell"/>
</dbReference>
<dbReference type="GO" id="GO:0009512">
    <property type="term" value="C:cytochrome b6f complex"/>
    <property type="evidence" value="ECO:0007669"/>
    <property type="project" value="InterPro"/>
</dbReference>
<dbReference type="GO" id="GO:0045158">
    <property type="term" value="F:electron transporter, transferring electrons within cytochrome b6/f complex of photosystem II activity"/>
    <property type="evidence" value="ECO:0007669"/>
    <property type="project" value="UniProtKB-UniRule"/>
</dbReference>
<dbReference type="GO" id="GO:0015979">
    <property type="term" value="P:photosynthesis"/>
    <property type="evidence" value="ECO:0007669"/>
    <property type="project" value="UniProtKB-KW"/>
</dbReference>
<dbReference type="HAMAP" id="MF_00433">
    <property type="entry name" value="Cytb6_f_PetL"/>
    <property type="match status" value="1"/>
</dbReference>
<dbReference type="InterPro" id="IPR007802">
    <property type="entry name" value="Cyt_b6/f_cplx_su6"/>
</dbReference>
<dbReference type="PANTHER" id="PTHR37266">
    <property type="entry name" value="CYTOCHROME B6-F COMPLEX SUBUNIT 6"/>
    <property type="match status" value="1"/>
</dbReference>
<dbReference type="PANTHER" id="PTHR37266:SF1">
    <property type="entry name" value="CYTOCHROME B6-F COMPLEX SUBUNIT 6"/>
    <property type="match status" value="1"/>
</dbReference>
<dbReference type="Pfam" id="PF05115">
    <property type="entry name" value="PetL"/>
    <property type="match status" value="1"/>
</dbReference>
<proteinExistence type="inferred from homology"/>
<accession>Q1KXU1</accession>
<feature type="chain" id="PRO_0000275526" description="Cytochrome b6-f complex subunit 6">
    <location>
        <begin position="1"/>
        <end position="31"/>
    </location>
</feature>
<feature type="transmembrane region" description="Helical" evidence="1">
    <location>
        <begin position="3"/>
        <end position="23"/>
    </location>
</feature>
<geneLocation type="chloroplast"/>
<protein>
    <recommendedName>
        <fullName evidence="1">Cytochrome b6-f complex subunit 6</fullName>
    </recommendedName>
    <alternativeName>
        <fullName evidence="1">Cytochrome b6-f complex subunit PetL</fullName>
    </alternativeName>
    <alternativeName>
        <fullName evidence="1">Cytochrome b6-f complex subunit VI</fullName>
    </alternativeName>
</protein>
<gene>
    <name evidence="1" type="primary">petL</name>
</gene>
<keyword id="KW-0150">Chloroplast</keyword>
<keyword id="KW-0249">Electron transport</keyword>
<keyword id="KW-0472">Membrane</keyword>
<keyword id="KW-0602">Photosynthesis</keyword>
<keyword id="KW-0934">Plastid</keyword>
<keyword id="KW-0793">Thylakoid</keyword>
<keyword id="KW-0812">Transmembrane</keyword>
<keyword id="KW-1133">Transmembrane helix</keyword>
<keyword id="KW-0813">Transport</keyword>